<reference key="1">
    <citation type="journal article" date="1989" name="Proc. Natl. Acad. Sci. U.S.A.">
        <title>Expression and nucleotide sequence of a plasmid-determined divalent cation efflux system from Alcaligenes eutrophus.</title>
        <authorList>
            <person name="Nies D.H."/>
            <person name="Nies A."/>
            <person name="Chu L."/>
            <person name="Silver S."/>
        </authorList>
    </citation>
    <scope>NUCLEOTIDE SEQUENCE [GENOMIC DNA]</scope>
</reference>
<reference key="2">
    <citation type="submission" date="1996-06" db="EMBL/GenBank/DDBJ databases">
        <authorList>
            <person name="van der Lelie D."/>
            <person name="Schwuchow T."/>
            <person name="Wuertz S."/>
            <person name="Schwidetzky U."/>
            <person name="Baeyens W."/>
            <person name="Scheel P.O."/>
            <person name="Nies D.H."/>
        </authorList>
    </citation>
    <scope>SEQUENCE REVISION TO 918 AND 959-960</scope>
</reference>
<reference key="3">
    <citation type="submission" date="2004-11" db="EMBL/GenBank/DDBJ databases">
        <title>Sequence and features of the Ralstonia metallidurans CH34 heavy metals plasmids pMOL28 and pMOL30.</title>
        <authorList>
            <person name="Monchy S."/>
            <person name="van der Lelie D."/>
            <person name="Vallaeys T."/>
            <person name="Taghavi S."/>
            <person name="Benotmane M."/>
            <person name="McCorkle S."/>
            <person name="Dunn J."/>
            <person name="Lapidus A."/>
            <person name="Mergeay M."/>
        </authorList>
    </citation>
    <scope>NUCLEOTIDE SEQUENCE [LARGE SCALE GENOMIC DNA]</scope>
</reference>
<reference key="4">
    <citation type="journal article" date="2010" name="PLoS ONE">
        <title>The complete genome sequence of Cupriavidus metallidurans strain CH34, a master survivalist in harsh and anthropogenic environments.</title>
        <authorList>
            <person name="Janssen P.J."/>
            <person name="Van Houdt R."/>
            <person name="Moors H."/>
            <person name="Monsieurs P."/>
            <person name="Morin N."/>
            <person name="Michaux A."/>
            <person name="Benotmane M.A."/>
            <person name="Leys N."/>
            <person name="Vallaeys T."/>
            <person name="Lapidus A."/>
            <person name="Monchy S."/>
            <person name="Medigue C."/>
            <person name="Taghavi S."/>
            <person name="McCorkle S."/>
            <person name="Dunn J."/>
            <person name="van der Lelie D."/>
            <person name="Mergeay M."/>
        </authorList>
    </citation>
    <scope>NUCLEOTIDE SEQUENCE [LARGE SCALE GENOMIC DNA]</scope>
    <source>
        <strain>ATCC 43123 / DSM 2839 / NBRC 102507 / CH34</strain>
    </source>
</reference>
<reference key="5">
    <citation type="journal article" date="1995" name="J. Ind. Microbiol.">
        <title>The czc operon of Alcaligenes eutrophus CH34: from resistance mechanism to the removal of heavy metals.</title>
        <authorList>
            <person name="Diels L."/>
            <person name="Dong Q."/>
            <person name="van der Lelie D."/>
            <person name="Baeyens W."/>
            <person name="Mergeay M."/>
        </authorList>
    </citation>
    <scope>CHARACTERIZATION</scope>
    <scope>INDUCTION</scope>
    <scope>POSSIBLE MODE OF ACTION</scope>
</reference>
<organism>
    <name type="scientific">Cupriavidus metallidurans (strain ATCC 43123 / DSM 2839 / NBRC 102507 / CH34)</name>
    <name type="common">Ralstonia metallidurans</name>
    <dbReference type="NCBI Taxonomy" id="266264"/>
    <lineage>
        <taxon>Bacteria</taxon>
        <taxon>Pseudomonadati</taxon>
        <taxon>Pseudomonadota</taxon>
        <taxon>Betaproteobacteria</taxon>
        <taxon>Burkholderiales</taxon>
        <taxon>Burkholderiaceae</taxon>
        <taxon>Cupriavidus</taxon>
    </lineage>
</organism>
<dbReference type="EMBL" id="X98451">
    <property type="protein sequence ID" value="CAA67084.1"/>
    <property type="molecule type" value="Genomic_DNA"/>
</dbReference>
<dbReference type="EMBL" id="X71400">
    <property type="protein sequence ID" value="CAI11244.1"/>
    <property type="molecule type" value="Genomic_DNA"/>
</dbReference>
<dbReference type="EMBL" id="CP000354">
    <property type="protein sequence ID" value="ABF12839.1"/>
    <property type="molecule type" value="Genomic_DNA"/>
</dbReference>
<dbReference type="PIR" id="A33830">
    <property type="entry name" value="A33830"/>
</dbReference>
<dbReference type="RefSeq" id="WP_011229347.1">
    <property type="nucleotide sequence ID" value="NC_006466.1"/>
</dbReference>
<dbReference type="RefSeq" id="YP_145595.1">
    <property type="nucleotide sequence ID" value="NC_006466.1"/>
</dbReference>
<dbReference type="SMR" id="P13511"/>
<dbReference type="TCDB" id="2.A.6.1.2">
    <property type="family name" value="the resistance-nodulation-cell division (rnd) superfamily"/>
</dbReference>
<dbReference type="KEGG" id="rme:Rmet_5980"/>
<dbReference type="HOGENOM" id="CLU_002755_1_2_4"/>
<dbReference type="Proteomes" id="UP000002429">
    <property type="component" value="Plasmid pMOL30"/>
</dbReference>
<dbReference type="GO" id="GO:0005886">
    <property type="term" value="C:plasma membrane"/>
    <property type="evidence" value="ECO:0007669"/>
    <property type="project" value="UniProtKB-SubCell"/>
</dbReference>
<dbReference type="GO" id="GO:0008324">
    <property type="term" value="F:monoatomic cation transmembrane transporter activity"/>
    <property type="evidence" value="ECO:0007669"/>
    <property type="project" value="InterPro"/>
</dbReference>
<dbReference type="GO" id="GO:0042910">
    <property type="term" value="F:xenobiotic transmembrane transporter activity"/>
    <property type="evidence" value="ECO:0007669"/>
    <property type="project" value="TreeGrafter"/>
</dbReference>
<dbReference type="GO" id="GO:0046686">
    <property type="term" value="P:response to cadmium ion"/>
    <property type="evidence" value="ECO:0007669"/>
    <property type="project" value="UniProtKB-KW"/>
</dbReference>
<dbReference type="Gene3D" id="3.30.70.1430">
    <property type="entry name" value="Multidrug efflux transporter AcrB pore domain"/>
    <property type="match status" value="2"/>
</dbReference>
<dbReference type="Gene3D" id="3.30.70.1440">
    <property type="entry name" value="Multidrug efflux transporter AcrB pore domain"/>
    <property type="match status" value="1"/>
</dbReference>
<dbReference type="Gene3D" id="3.30.70.1320">
    <property type="entry name" value="Multidrug efflux transporter AcrB pore domain like"/>
    <property type="match status" value="1"/>
</dbReference>
<dbReference type="Gene3D" id="3.30.2090.10">
    <property type="entry name" value="Multidrug efflux transporter AcrB TolC docking domain, DN and DC subdomains"/>
    <property type="match status" value="2"/>
</dbReference>
<dbReference type="Gene3D" id="1.20.1640.10">
    <property type="entry name" value="Multidrug efflux transporter AcrB transmembrane domain"/>
    <property type="match status" value="2"/>
</dbReference>
<dbReference type="InterPro" id="IPR027463">
    <property type="entry name" value="AcrB_DN_DC_subdom"/>
</dbReference>
<dbReference type="InterPro" id="IPR001036">
    <property type="entry name" value="Acrflvin-R"/>
</dbReference>
<dbReference type="InterPro" id="IPR004763">
    <property type="entry name" value="CusA-like"/>
</dbReference>
<dbReference type="NCBIfam" id="TIGR00914">
    <property type="entry name" value="2A0601"/>
    <property type="match status" value="1"/>
</dbReference>
<dbReference type="PANTHER" id="PTHR32063">
    <property type="match status" value="1"/>
</dbReference>
<dbReference type="PANTHER" id="PTHR32063:SF24">
    <property type="entry name" value="CATION EFFLUX SYSTEM (ACRB_ACRD_ACRF FAMILY)"/>
    <property type="match status" value="1"/>
</dbReference>
<dbReference type="Pfam" id="PF00873">
    <property type="entry name" value="ACR_tran"/>
    <property type="match status" value="1"/>
</dbReference>
<dbReference type="PRINTS" id="PR00702">
    <property type="entry name" value="ACRIFLAVINRP"/>
</dbReference>
<dbReference type="SUPFAM" id="SSF82693">
    <property type="entry name" value="Multidrug efflux transporter AcrB pore domain, PN1, PN2, PC1 and PC2 subdomains"/>
    <property type="match status" value="3"/>
</dbReference>
<dbReference type="SUPFAM" id="SSF82714">
    <property type="entry name" value="Multidrug efflux transporter AcrB TolC docking domain, DN and DC subdomains"/>
    <property type="match status" value="2"/>
</dbReference>
<dbReference type="SUPFAM" id="SSF82866">
    <property type="entry name" value="Multidrug efflux transporter AcrB transmembrane domain"/>
    <property type="match status" value="2"/>
</dbReference>
<sequence>MFERIISFAIQQRWLVLLAVFGMAGLGIFSYNRLPIDAVPDITNVQVQVNTSAPGYSPLETEQRATYPIEVVMAGLPGLEQTRSLSRYGLSQVTVIFKDGTDVYFARQLVNQRIQEAKDNLPEGVVPAMGPISTGLGEIYLWTVEAEEGARKADGTAYTPTDLREIQDWVVRPQLRNVPGVTEINTIGGFNKQYLVAPSLERLASYGLTLTDVVNALNKNNDNVGAGYIERRGEQYLVRAPGQVASEDDIRNIIVGTAQGQPIRIRDIGDVEIGKELRTGAATENGKEVVLGTVFMLIGENSRAVSKAVDEKVASINRTMPEGVKIVTVYDRTRLVDKAIATVKKNLLEGAVLVIVILFLFLGNIRAALITATIIPLAMLFTFTGMVNYKISANLMSLGALDFGIIIDGAVVIVENCVRRLAHAQEHHGRPLTRSERFHEVFAAAKEARRPLIFGQLIIMIVYLPIFALTGVEGKMFHPMAFTVVLALLGAMILSVTFVPAAVALFIGERVAEKENRLMLWAKRRYEPLLEKSLANTAVVLTFAAVSIVLCVAIAARLGSEFIPNLNEGDIAIQALRIPGTSLSQSVEMQKTIETTLKAKFPEIERVFARTGTAEIASDLMPPNISDGYIMLKPEKDWPEPKKTHAELLSAIQEEAGKIPGNNYEFSQPIQLRFNELISGVRSDVAVKIFGDDNNVLSETAKKVSAVLQGIPGAQEVKVEQTTGLPMLTVKIDREKAARYGLNMSDVQDAVATGVGGRDSGTFFQGDRRFDIVVRLPEAVRGEVEALRRLPIPLPKGVDARTTFIPLSEVATLEMAPGPNQISRENGKRRIVISANVRGRDIGSFVPEAEAAIQSQVKIPAGYWMTWGGTFEQLQSATTRLQVVVPVALLLVFVLLFAMFNNIKDGLLVFTGIPFALTGGILALWIRGIPMSITAAVGFIALCGVAVLNGLVMLSFIRSLREEGHSLDSAVRVGALTRLRPVLMTALVASLGFVPMAIATGTGAEVQRPLATVVIGGILSSTALTLLVLPVLYRLAHRKDEDAEDTREPVTQTHQPDQGRQPA</sequence>
<name>CZCA_CUPMC</name>
<gene>
    <name type="primary">czcA</name>
    <name type="ordered locus">Rmet_5980</name>
</gene>
<accession>P13511</accession>
<accession>P94142</accession>
<accession>Q58AM3</accession>
<geneLocation type="plasmid">
    <name>pMOL30</name>
</geneLocation>
<proteinExistence type="evidence at protein level"/>
<comment type="function">
    <text>Has a low cation transport activity for cobalt, it is essential for the expression of cobalt, zinc, and cadmium resistance. CzcA and CzcB together would act in zinc efflux nearly as effectively as the complete CZC efflux system (CzcABC).</text>
</comment>
<comment type="subcellular location">
    <subcellularLocation>
        <location evidence="4">Cell inner membrane</location>
        <topology evidence="4">Multi-pass membrane protein</topology>
    </subcellularLocation>
</comment>
<comment type="induction">
    <text evidence="3">By zinc, cadmium and cobalt (zinc being the best and cobalt being the worst inducer).</text>
</comment>
<comment type="biotechnology">
    <text evidence="3">In the presence of 2 mM Cd(2+) or 4-10 mM Zn(2+) up to 99% of the metal is removed from the culture supernatant and is sequestered via bioprecipitation. Additionally Cu(2+), Co(2+), Ni(2+), Pb(2+), Y(3+) and Ge(4+) can also be removed from culture supernatants, although it is not clear which efflux system is responsible for all these substrates (PubMed:7766206).</text>
</comment>
<comment type="similarity">
    <text evidence="4">Belongs to the resistance-nodulation-cell division (RND) (TC 2.A.6) family.</text>
</comment>
<protein>
    <recommendedName>
        <fullName>Cobalt-zinc-cadmium resistance protein CzcA</fullName>
    </recommendedName>
    <alternativeName>
        <fullName>Cation efflux system protein CzcA</fullName>
    </alternativeName>
</protein>
<keyword id="KW-0105">Cadmium resistance</keyword>
<keyword id="KW-0997">Cell inner membrane</keyword>
<keyword id="KW-1003">Cell membrane</keyword>
<keyword id="KW-0170">Cobalt</keyword>
<keyword id="KW-0472">Membrane</keyword>
<keyword id="KW-0614">Plasmid</keyword>
<keyword id="KW-1185">Reference proteome</keyword>
<keyword id="KW-0812">Transmembrane</keyword>
<keyword id="KW-1133">Transmembrane helix</keyword>
<keyword id="KW-0813">Transport</keyword>
<keyword id="KW-0862">Zinc</keyword>
<evidence type="ECO:0000255" key="1"/>
<evidence type="ECO:0000256" key="2">
    <source>
        <dbReference type="SAM" id="MobiDB-lite"/>
    </source>
</evidence>
<evidence type="ECO:0000269" key="3">
    <source>
    </source>
</evidence>
<evidence type="ECO:0000305" key="4"/>
<feature type="chain" id="PRO_0000161818" description="Cobalt-zinc-cadmium resistance protein CzcA">
    <location>
        <begin position="1"/>
        <end position="1063"/>
    </location>
</feature>
<feature type="transmembrane region" description="Helical" evidence="1">
    <location>
        <begin position="14"/>
        <end position="34"/>
    </location>
</feature>
<feature type="transmembrane region" description="Helical" evidence="1">
    <location>
        <begin position="350"/>
        <end position="370"/>
    </location>
</feature>
<feature type="transmembrane region" description="Helical" evidence="1">
    <location>
        <begin position="371"/>
        <end position="391"/>
    </location>
</feature>
<feature type="transmembrane region" description="Helical" evidence="1">
    <location>
        <begin position="395"/>
        <end position="415"/>
    </location>
</feature>
<feature type="transmembrane region" description="Helical" evidence="1">
    <location>
        <begin position="452"/>
        <end position="472"/>
    </location>
</feature>
<feature type="transmembrane region" description="Helical" evidence="1">
    <location>
        <begin position="487"/>
        <end position="507"/>
    </location>
</feature>
<feature type="transmembrane region" description="Helical" evidence="1">
    <location>
        <begin position="534"/>
        <end position="554"/>
    </location>
</feature>
<feature type="transmembrane region" description="Helical" evidence="1">
    <location>
        <begin position="883"/>
        <end position="903"/>
    </location>
</feature>
<feature type="transmembrane region" description="Helical" evidence="1">
    <location>
        <begin position="906"/>
        <end position="926"/>
    </location>
</feature>
<feature type="transmembrane region" description="Helical" evidence="1">
    <location>
        <begin position="937"/>
        <end position="957"/>
    </location>
</feature>
<feature type="transmembrane region" description="Helical" evidence="1">
    <location>
        <begin position="981"/>
        <end position="1001"/>
    </location>
</feature>
<feature type="transmembrane region" description="Helical" evidence="1">
    <location>
        <begin position="1013"/>
        <end position="1033"/>
    </location>
</feature>
<feature type="region of interest" description="Disordered" evidence="2">
    <location>
        <begin position="1040"/>
        <end position="1063"/>
    </location>
</feature>
<feature type="compositionally biased region" description="Polar residues" evidence="2">
    <location>
        <begin position="1049"/>
        <end position="1063"/>
    </location>
</feature>
<feature type="sequence conflict" description="In Ref. 1; CAA67084." evidence="4" ref="1">
    <original>T</original>
    <variation>I</variation>
    <location>
        <position position="918"/>
    </location>
</feature>
<feature type="sequence conflict" description="In Ref. 1; CAA67084." evidence="4" ref="1">
    <original>SL</original>
    <variation>LV</variation>
    <location>
        <begin position="959"/>
        <end position="960"/>
    </location>
</feature>